<protein>
    <recommendedName>
        <fullName evidence="1">Small ribosomal subunit protein uS10</fullName>
    </recommendedName>
    <alternativeName>
        <fullName evidence="2">30S ribosomal protein S10</fullName>
    </alternativeName>
</protein>
<accession>A0PM62</accession>
<keyword id="KW-0687">Ribonucleoprotein</keyword>
<keyword id="KW-0689">Ribosomal protein</keyword>
<reference key="1">
    <citation type="journal article" date="2007" name="Genome Res.">
        <title>Reductive evolution and niche adaptation inferred from the genome of Mycobacterium ulcerans, the causative agent of Buruli ulcer.</title>
        <authorList>
            <person name="Stinear T.P."/>
            <person name="Seemann T."/>
            <person name="Pidot S."/>
            <person name="Frigui W."/>
            <person name="Reysset G."/>
            <person name="Garnier T."/>
            <person name="Meurice G."/>
            <person name="Simon D."/>
            <person name="Bouchier C."/>
            <person name="Ma L."/>
            <person name="Tichit M."/>
            <person name="Porter J.L."/>
            <person name="Ryan J."/>
            <person name="Johnson P.D.R."/>
            <person name="Davies J.K."/>
            <person name="Jenkin G.A."/>
            <person name="Small P.L.C."/>
            <person name="Jones L.M."/>
            <person name="Tekaia F."/>
            <person name="Laval F."/>
            <person name="Daffe M."/>
            <person name="Parkhill J."/>
            <person name="Cole S.T."/>
        </authorList>
    </citation>
    <scope>NUCLEOTIDE SEQUENCE [LARGE SCALE GENOMIC DNA]</scope>
    <source>
        <strain>Agy99</strain>
    </source>
</reference>
<organism>
    <name type="scientific">Mycobacterium ulcerans (strain Agy99)</name>
    <dbReference type="NCBI Taxonomy" id="362242"/>
    <lineage>
        <taxon>Bacteria</taxon>
        <taxon>Bacillati</taxon>
        <taxon>Actinomycetota</taxon>
        <taxon>Actinomycetes</taxon>
        <taxon>Mycobacteriales</taxon>
        <taxon>Mycobacteriaceae</taxon>
        <taxon>Mycobacterium</taxon>
        <taxon>Mycobacterium ulcerans group</taxon>
    </lineage>
</organism>
<proteinExistence type="inferred from homology"/>
<feature type="chain" id="PRO_1000015065" description="Small ribosomal subunit protein uS10">
    <location>
        <begin position="1"/>
        <end position="101"/>
    </location>
</feature>
<sequence>MAGQKIRIRLKAYDHEAIDASARKIVETVVRTGASVVGPVPLPTEKNVYCVVRSPHKYKDSREHFEMRTHKRLIDIIDPTPKTVDALMRIDLPASVDVNIQ</sequence>
<comment type="function">
    <text evidence="1">Involved in the binding of tRNA to the ribosomes.</text>
</comment>
<comment type="subunit">
    <text evidence="1">Part of the 30S ribosomal subunit.</text>
</comment>
<comment type="similarity">
    <text evidence="1">Belongs to the universal ribosomal protein uS10 family.</text>
</comment>
<gene>
    <name evidence="1" type="primary">rpsJ</name>
    <name type="ordered locus">MUL_0789</name>
</gene>
<evidence type="ECO:0000255" key="1">
    <source>
        <dbReference type="HAMAP-Rule" id="MF_00508"/>
    </source>
</evidence>
<evidence type="ECO:0000305" key="2"/>
<name>RS10_MYCUA</name>
<dbReference type="EMBL" id="CP000325">
    <property type="protein sequence ID" value="ABL03431.1"/>
    <property type="molecule type" value="Genomic_DNA"/>
</dbReference>
<dbReference type="RefSeq" id="WP_011739056.1">
    <property type="nucleotide sequence ID" value="NC_008611.1"/>
</dbReference>
<dbReference type="SMR" id="A0PM62"/>
<dbReference type="KEGG" id="mul:MUL_0789"/>
<dbReference type="eggNOG" id="COG0051">
    <property type="taxonomic scope" value="Bacteria"/>
</dbReference>
<dbReference type="HOGENOM" id="CLU_122625_1_3_11"/>
<dbReference type="Proteomes" id="UP000000765">
    <property type="component" value="Chromosome"/>
</dbReference>
<dbReference type="GO" id="GO:1990904">
    <property type="term" value="C:ribonucleoprotein complex"/>
    <property type="evidence" value="ECO:0007669"/>
    <property type="project" value="UniProtKB-KW"/>
</dbReference>
<dbReference type="GO" id="GO:0005840">
    <property type="term" value="C:ribosome"/>
    <property type="evidence" value="ECO:0007669"/>
    <property type="project" value="UniProtKB-KW"/>
</dbReference>
<dbReference type="GO" id="GO:0003735">
    <property type="term" value="F:structural constituent of ribosome"/>
    <property type="evidence" value="ECO:0007669"/>
    <property type="project" value="InterPro"/>
</dbReference>
<dbReference type="GO" id="GO:0000049">
    <property type="term" value="F:tRNA binding"/>
    <property type="evidence" value="ECO:0007669"/>
    <property type="project" value="UniProtKB-UniRule"/>
</dbReference>
<dbReference type="GO" id="GO:0006412">
    <property type="term" value="P:translation"/>
    <property type="evidence" value="ECO:0007669"/>
    <property type="project" value="UniProtKB-UniRule"/>
</dbReference>
<dbReference type="FunFam" id="3.30.70.600:FF:000001">
    <property type="entry name" value="30S ribosomal protein S10"/>
    <property type="match status" value="1"/>
</dbReference>
<dbReference type="Gene3D" id="3.30.70.600">
    <property type="entry name" value="Ribosomal protein S10 domain"/>
    <property type="match status" value="1"/>
</dbReference>
<dbReference type="HAMAP" id="MF_00508">
    <property type="entry name" value="Ribosomal_uS10"/>
    <property type="match status" value="1"/>
</dbReference>
<dbReference type="InterPro" id="IPR001848">
    <property type="entry name" value="Ribosomal_uS10"/>
</dbReference>
<dbReference type="InterPro" id="IPR018268">
    <property type="entry name" value="Ribosomal_uS10_CS"/>
</dbReference>
<dbReference type="InterPro" id="IPR027486">
    <property type="entry name" value="Ribosomal_uS10_dom"/>
</dbReference>
<dbReference type="InterPro" id="IPR036838">
    <property type="entry name" value="Ribosomal_uS10_dom_sf"/>
</dbReference>
<dbReference type="NCBIfam" id="NF001861">
    <property type="entry name" value="PRK00596.1"/>
    <property type="match status" value="1"/>
</dbReference>
<dbReference type="NCBIfam" id="TIGR01049">
    <property type="entry name" value="rpsJ_bact"/>
    <property type="match status" value="1"/>
</dbReference>
<dbReference type="PANTHER" id="PTHR11700">
    <property type="entry name" value="30S RIBOSOMAL PROTEIN S10 FAMILY MEMBER"/>
    <property type="match status" value="1"/>
</dbReference>
<dbReference type="Pfam" id="PF00338">
    <property type="entry name" value="Ribosomal_S10"/>
    <property type="match status" value="1"/>
</dbReference>
<dbReference type="PRINTS" id="PR00971">
    <property type="entry name" value="RIBOSOMALS10"/>
</dbReference>
<dbReference type="SMART" id="SM01403">
    <property type="entry name" value="Ribosomal_S10"/>
    <property type="match status" value="1"/>
</dbReference>
<dbReference type="SUPFAM" id="SSF54999">
    <property type="entry name" value="Ribosomal protein S10"/>
    <property type="match status" value="1"/>
</dbReference>
<dbReference type="PROSITE" id="PS00361">
    <property type="entry name" value="RIBOSOMAL_S10"/>
    <property type="match status" value="1"/>
</dbReference>